<sequence length="302" mass="31641">MAFSRESALDVAKVLSESLPYIQRFAGKTLVIKYGGNAMTDENLQAGFARDIVLMKAIGINPIVVHGGGPQIGDMLAKLNIESKFINGMRVTDTATMDVVEMVLGGQVNKEIVNLICEAGGKAIGITGKDSRFIKAKKLFVKHQAEGMTAPEQVDIGHVGEVASVDTSFLKFFENSDLIPVIAPIGVDDEGNSYNINADLVAGKVAEAVGAEKLMLLTNISGVQDKQGNVLTGLSTAQVDALIADGTIYGGMLPKISCALSAVNAGVTSAHIIDGRVPHATLLEIFTDTGVGTLISNTKVGE</sequence>
<reference key="1">
    <citation type="submission" date="2007-06" db="EMBL/GenBank/DDBJ databases">
        <title>Complete sequence of Marinomonas sp. MWYL1.</title>
        <authorList>
            <consortium name="US DOE Joint Genome Institute"/>
            <person name="Copeland A."/>
            <person name="Lucas S."/>
            <person name="Lapidus A."/>
            <person name="Barry K."/>
            <person name="Glavina del Rio T."/>
            <person name="Dalin E."/>
            <person name="Tice H."/>
            <person name="Pitluck S."/>
            <person name="Kiss H."/>
            <person name="Brettin T."/>
            <person name="Bruce D."/>
            <person name="Detter J.C."/>
            <person name="Han C."/>
            <person name="Schmutz J."/>
            <person name="Larimer F."/>
            <person name="Land M."/>
            <person name="Hauser L."/>
            <person name="Kyrpides N."/>
            <person name="Kim E."/>
            <person name="Johnston A.W.B."/>
            <person name="Todd J.D."/>
            <person name="Rogers R."/>
            <person name="Wexler M."/>
            <person name="Bond P.L."/>
            <person name="Li Y."/>
            <person name="Richardson P."/>
        </authorList>
    </citation>
    <scope>NUCLEOTIDE SEQUENCE [LARGE SCALE GENOMIC DNA]</scope>
    <source>
        <strain>MWYL1</strain>
    </source>
</reference>
<organism>
    <name type="scientific">Marinomonas sp. (strain MWYL1)</name>
    <dbReference type="NCBI Taxonomy" id="400668"/>
    <lineage>
        <taxon>Bacteria</taxon>
        <taxon>Pseudomonadati</taxon>
        <taxon>Pseudomonadota</taxon>
        <taxon>Gammaproteobacteria</taxon>
        <taxon>Oceanospirillales</taxon>
        <taxon>Oceanospirillaceae</taxon>
        <taxon>Marinomonas</taxon>
    </lineage>
</organism>
<accession>A6VSX6</accession>
<evidence type="ECO:0000255" key="1">
    <source>
        <dbReference type="HAMAP-Rule" id="MF_00082"/>
    </source>
</evidence>
<gene>
    <name evidence="1" type="primary">argB</name>
    <name type="ordered locus">Mmwyl1_0621</name>
</gene>
<keyword id="KW-0028">Amino-acid biosynthesis</keyword>
<keyword id="KW-0055">Arginine biosynthesis</keyword>
<keyword id="KW-0067">ATP-binding</keyword>
<keyword id="KW-0963">Cytoplasm</keyword>
<keyword id="KW-0418">Kinase</keyword>
<keyword id="KW-0547">Nucleotide-binding</keyword>
<keyword id="KW-0808">Transferase</keyword>
<protein>
    <recommendedName>
        <fullName evidence="1">Acetylglutamate kinase</fullName>
        <ecNumber evidence="1">2.7.2.8</ecNumber>
    </recommendedName>
    <alternativeName>
        <fullName evidence="1">N-acetyl-L-glutamate 5-phosphotransferase</fullName>
    </alternativeName>
    <alternativeName>
        <fullName evidence="1">NAG kinase</fullName>
        <shortName evidence="1">NAGK</shortName>
    </alternativeName>
</protein>
<comment type="function">
    <text evidence="1">Catalyzes the ATP-dependent phosphorylation of N-acetyl-L-glutamate.</text>
</comment>
<comment type="catalytic activity">
    <reaction evidence="1">
        <text>N-acetyl-L-glutamate + ATP = N-acetyl-L-glutamyl 5-phosphate + ADP</text>
        <dbReference type="Rhea" id="RHEA:14629"/>
        <dbReference type="ChEBI" id="CHEBI:30616"/>
        <dbReference type="ChEBI" id="CHEBI:44337"/>
        <dbReference type="ChEBI" id="CHEBI:57936"/>
        <dbReference type="ChEBI" id="CHEBI:456216"/>
        <dbReference type="EC" id="2.7.2.8"/>
    </reaction>
</comment>
<comment type="pathway">
    <text evidence="1">Amino-acid biosynthesis; L-arginine biosynthesis; N(2)-acetyl-L-ornithine from L-glutamate: step 2/4.</text>
</comment>
<comment type="subcellular location">
    <subcellularLocation>
        <location evidence="1">Cytoplasm</location>
    </subcellularLocation>
</comment>
<comment type="similarity">
    <text evidence="1">Belongs to the acetylglutamate kinase family. ArgB subfamily.</text>
</comment>
<proteinExistence type="inferred from homology"/>
<name>ARGB_MARMS</name>
<feature type="chain" id="PRO_1000075312" description="Acetylglutamate kinase">
    <location>
        <begin position="1"/>
        <end position="302"/>
    </location>
</feature>
<feature type="binding site" evidence="1">
    <location>
        <begin position="68"/>
        <end position="69"/>
    </location>
    <ligand>
        <name>substrate</name>
    </ligand>
</feature>
<feature type="binding site" evidence="1">
    <location>
        <position position="90"/>
    </location>
    <ligand>
        <name>substrate</name>
    </ligand>
</feature>
<feature type="binding site" evidence="1">
    <location>
        <position position="195"/>
    </location>
    <ligand>
        <name>substrate</name>
    </ligand>
</feature>
<feature type="site" description="Transition state stabilizer" evidence="1">
    <location>
        <position position="33"/>
    </location>
</feature>
<feature type="site" description="Transition state stabilizer" evidence="1">
    <location>
        <position position="255"/>
    </location>
</feature>
<dbReference type="EC" id="2.7.2.8" evidence="1"/>
<dbReference type="EMBL" id="CP000749">
    <property type="protein sequence ID" value="ABR69555.1"/>
    <property type="molecule type" value="Genomic_DNA"/>
</dbReference>
<dbReference type="SMR" id="A6VSX6"/>
<dbReference type="STRING" id="400668.Mmwyl1_0621"/>
<dbReference type="KEGG" id="mmw:Mmwyl1_0621"/>
<dbReference type="eggNOG" id="COG0548">
    <property type="taxonomic scope" value="Bacteria"/>
</dbReference>
<dbReference type="HOGENOM" id="CLU_053680_0_0_6"/>
<dbReference type="OrthoDB" id="9803155at2"/>
<dbReference type="UniPathway" id="UPA00068">
    <property type="reaction ID" value="UER00107"/>
</dbReference>
<dbReference type="GO" id="GO:0005737">
    <property type="term" value="C:cytoplasm"/>
    <property type="evidence" value="ECO:0007669"/>
    <property type="project" value="UniProtKB-SubCell"/>
</dbReference>
<dbReference type="GO" id="GO:0003991">
    <property type="term" value="F:acetylglutamate kinase activity"/>
    <property type="evidence" value="ECO:0007669"/>
    <property type="project" value="UniProtKB-UniRule"/>
</dbReference>
<dbReference type="GO" id="GO:0005524">
    <property type="term" value="F:ATP binding"/>
    <property type="evidence" value="ECO:0007669"/>
    <property type="project" value="UniProtKB-UniRule"/>
</dbReference>
<dbReference type="GO" id="GO:0042450">
    <property type="term" value="P:arginine biosynthetic process via ornithine"/>
    <property type="evidence" value="ECO:0007669"/>
    <property type="project" value="UniProtKB-UniRule"/>
</dbReference>
<dbReference type="GO" id="GO:0006526">
    <property type="term" value="P:L-arginine biosynthetic process"/>
    <property type="evidence" value="ECO:0007669"/>
    <property type="project" value="UniProtKB-UniPathway"/>
</dbReference>
<dbReference type="CDD" id="cd04250">
    <property type="entry name" value="AAK_NAGK-C"/>
    <property type="match status" value="1"/>
</dbReference>
<dbReference type="FunFam" id="3.40.1160.10:FF:000004">
    <property type="entry name" value="Acetylglutamate kinase"/>
    <property type="match status" value="1"/>
</dbReference>
<dbReference type="Gene3D" id="3.40.1160.10">
    <property type="entry name" value="Acetylglutamate kinase-like"/>
    <property type="match status" value="1"/>
</dbReference>
<dbReference type="HAMAP" id="MF_00082">
    <property type="entry name" value="ArgB"/>
    <property type="match status" value="1"/>
</dbReference>
<dbReference type="InterPro" id="IPR036393">
    <property type="entry name" value="AceGlu_kinase-like_sf"/>
</dbReference>
<dbReference type="InterPro" id="IPR004662">
    <property type="entry name" value="AcgluKinase_fam"/>
</dbReference>
<dbReference type="InterPro" id="IPR037528">
    <property type="entry name" value="ArgB"/>
</dbReference>
<dbReference type="InterPro" id="IPR001048">
    <property type="entry name" value="Asp/Glu/Uridylate_kinase"/>
</dbReference>
<dbReference type="InterPro" id="IPR001057">
    <property type="entry name" value="Glu/AcGlu_kinase"/>
</dbReference>
<dbReference type="InterPro" id="IPR041727">
    <property type="entry name" value="NAGK-C"/>
</dbReference>
<dbReference type="NCBIfam" id="TIGR00761">
    <property type="entry name" value="argB"/>
    <property type="match status" value="1"/>
</dbReference>
<dbReference type="PANTHER" id="PTHR23342">
    <property type="entry name" value="N-ACETYLGLUTAMATE SYNTHASE"/>
    <property type="match status" value="1"/>
</dbReference>
<dbReference type="PANTHER" id="PTHR23342:SF0">
    <property type="entry name" value="N-ACETYLGLUTAMATE SYNTHASE, MITOCHONDRIAL"/>
    <property type="match status" value="1"/>
</dbReference>
<dbReference type="Pfam" id="PF00696">
    <property type="entry name" value="AA_kinase"/>
    <property type="match status" value="1"/>
</dbReference>
<dbReference type="PIRSF" id="PIRSF000728">
    <property type="entry name" value="NAGK"/>
    <property type="match status" value="1"/>
</dbReference>
<dbReference type="PRINTS" id="PR00474">
    <property type="entry name" value="GLU5KINASE"/>
</dbReference>
<dbReference type="SUPFAM" id="SSF53633">
    <property type="entry name" value="Carbamate kinase-like"/>
    <property type="match status" value="1"/>
</dbReference>